<keyword id="KW-0002">3D-structure</keyword>
<keyword id="KW-1015">Disulfide bond</keyword>
<keyword id="KW-0325">Glycoprotein</keyword>
<keyword id="KW-0328">Glycosyltransferase</keyword>
<keyword id="KW-0464">Manganese</keyword>
<keyword id="KW-0472">Membrane</keyword>
<keyword id="KW-0479">Metal-binding</keyword>
<keyword id="KW-0547">Nucleotide-binding</keyword>
<keyword id="KW-1185">Reference proteome</keyword>
<keyword id="KW-0735">Signal-anchor</keyword>
<keyword id="KW-0808">Transferase</keyword>
<keyword id="KW-0812">Transmembrane</keyword>
<keyword id="KW-1133">Transmembrane helix</keyword>
<organism>
    <name type="scientific">Drosophila melanogaster</name>
    <name type="common">Fruit fly</name>
    <dbReference type="NCBI Taxonomy" id="7227"/>
    <lineage>
        <taxon>Eukaryota</taxon>
        <taxon>Metazoa</taxon>
        <taxon>Ecdysozoa</taxon>
        <taxon>Arthropoda</taxon>
        <taxon>Hexapoda</taxon>
        <taxon>Insecta</taxon>
        <taxon>Pterygota</taxon>
        <taxon>Neoptera</taxon>
        <taxon>Endopterygota</taxon>
        <taxon>Diptera</taxon>
        <taxon>Brachycera</taxon>
        <taxon>Muscomorpha</taxon>
        <taxon>Ephydroidea</taxon>
        <taxon>Drosophilidae</taxon>
        <taxon>Drosophila</taxon>
        <taxon>Sophophora</taxon>
    </lineage>
</organism>
<feature type="chain" id="PRO_0000285072" description="Glycoprotein-N-acetylgalactosamine 3-beta-galactosyltransferase 1">
    <location>
        <begin position="1"/>
        <end position="388"/>
    </location>
</feature>
<feature type="topological domain" description="Cytoplasmic" evidence="3">
    <location>
        <begin position="1"/>
        <end position="21"/>
    </location>
</feature>
<feature type="transmembrane region" description="Helical; Signal-anchor for type II membrane protein" evidence="3">
    <location>
        <begin position="22"/>
        <end position="42"/>
    </location>
</feature>
<feature type="topological domain" description="Lumenal" evidence="3">
    <location>
        <begin position="43"/>
        <end position="388"/>
    </location>
</feature>
<feature type="region of interest" description="Disordered" evidence="4">
    <location>
        <begin position="368"/>
        <end position="388"/>
    </location>
</feature>
<feature type="compositionally biased region" description="Basic and acidic residues" evidence="4">
    <location>
        <begin position="378"/>
        <end position="388"/>
    </location>
</feature>
<feature type="binding site" evidence="7 11">
    <location>
        <position position="106"/>
    </location>
    <ligand>
        <name>UDP</name>
        <dbReference type="ChEBI" id="CHEBI:58223"/>
    </ligand>
</feature>
<feature type="binding site" evidence="7 11">
    <location>
        <position position="108"/>
    </location>
    <ligand>
        <name>UDP</name>
        <dbReference type="ChEBI" id="CHEBI:58223"/>
    </ligand>
</feature>
<feature type="binding site" evidence="7 11">
    <location>
        <position position="150"/>
    </location>
    <ligand>
        <name>UDP</name>
        <dbReference type="ChEBI" id="CHEBI:58223"/>
    </ligand>
</feature>
<feature type="binding site" evidence="7 11">
    <location>
        <position position="151"/>
    </location>
    <ligand>
        <name>UDP</name>
        <dbReference type="ChEBI" id="CHEBI:58223"/>
    </ligand>
</feature>
<feature type="binding site" evidence="7 11">
    <location>
        <position position="152"/>
    </location>
    <ligand>
        <name>UDP</name>
        <dbReference type="ChEBI" id="CHEBI:58223"/>
    </ligand>
</feature>
<feature type="binding site" evidence="7 11">
    <location>
        <position position="158"/>
    </location>
    <ligand>
        <name>UDP</name>
        <dbReference type="ChEBI" id="CHEBI:58223"/>
    </ligand>
</feature>
<feature type="binding site" evidence="7 11">
    <location>
        <position position="181"/>
    </location>
    <ligand>
        <name>Mn(2+)</name>
        <dbReference type="ChEBI" id="CHEBI:29035"/>
    </ligand>
</feature>
<feature type="binding site" evidence="7 11">
    <location>
        <position position="181"/>
    </location>
    <ligand>
        <name>UDP</name>
        <dbReference type="ChEBI" id="CHEBI:58223"/>
    </ligand>
</feature>
<feature type="binding site" evidence="7 11">
    <location>
        <position position="183"/>
    </location>
    <ligand>
        <name>Mn(2+)</name>
        <dbReference type="ChEBI" id="CHEBI:29035"/>
    </ligand>
</feature>
<feature type="binding site" evidence="7 11">
    <location>
        <position position="300"/>
    </location>
    <ligand>
        <name>a glycoprotein</name>
        <dbReference type="ChEBI" id="CHEBI:17089"/>
    </ligand>
</feature>
<feature type="binding site" evidence="7 11">
    <location>
        <position position="324"/>
    </location>
    <ligand>
        <name>Mn(2+)</name>
        <dbReference type="ChEBI" id="CHEBI:29035"/>
    </ligand>
</feature>
<feature type="binding site" evidence="7 11">
    <location>
        <position position="324"/>
    </location>
    <ligand>
        <name>UDP</name>
        <dbReference type="ChEBI" id="CHEBI:58223"/>
    </ligand>
</feature>
<feature type="binding site" evidence="7 11">
    <location>
        <position position="325"/>
    </location>
    <ligand>
        <name>UDP</name>
        <dbReference type="ChEBI" id="CHEBI:58223"/>
    </ligand>
</feature>
<feature type="glycosylation site" description="N-linked (GlcNAc...) asparagine" evidence="3">
    <location>
        <position position="88"/>
    </location>
</feature>
<feature type="disulfide bond" evidence="7 11">
    <location>
        <begin position="103"/>
        <end position="127"/>
    </location>
</feature>
<feature type="disulfide bond" evidence="7 11">
    <location>
        <begin position="246"/>
        <end position="261"/>
    </location>
</feature>
<feature type="disulfide bond" evidence="7 11">
    <location>
        <begin position="315"/>
        <end position="316"/>
    </location>
</feature>
<feature type="mutagenesis site" description="15-fold reduction in activity." evidence="7">
    <original>R</original>
    <variation>A</variation>
    <location>
        <position position="152"/>
    </location>
</feature>
<feature type="mutagenesis site" description="25-fold reduction in activity." evidence="7">
    <original>Y</original>
    <variation>A</variation>
    <location>
        <position position="213"/>
    </location>
</feature>
<feature type="mutagenesis site" description="Inactive." evidence="7">
    <original>Y</original>
    <variation>A</variation>
    <location>
        <position position="218"/>
    </location>
</feature>
<feature type="mutagenesis site" description="Inactive." evidence="7">
    <original>D</original>
    <variation>A</variation>
    <location>
        <position position="255"/>
    </location>
</feature>
<feature type="mutagenesis site" description="Inactive." evidence="7">
    <original>W</original>
    <variation>A</variation>
    <location>
        <position position="300"/>
    </location>
</feature>
<feature type="mutagenesis site" description="25-fold reduction in activity." evidence="7">
    <original>Y</original>
    <variation>A</variation>
    <location>
        <position position="325"/>
    </location>
</feature>
<feature type="helix" evidence="12">
    <location>
        <begin position="90"/>
        <end position="98"/>
    </location>
</feature>
<feature type="strand" evidence="12">
    <location>
        <begin position="101"/>
        <end position="106"/>
    </location>
</feature>
<feature type="helix" evidence="12">
    <location>
        <begin position="109"/>
        <end position="111"/>
    </location>
</feature>
<feature type="turn" evidence="12">
    <location>
        <begin position="112"/>
        <end position="115"/>
    </location>
</feature>
<feature type="helix" evidence="12">
    <location>
        <begin position="116"/>
        <end position="121"/>
    </location>
</feature>
<feature type="helix" evidence="12">
    <location>
        <begin position="123"/>
        <end position="126"/>
    </location>
</feature>
<feature type="strand" evidence="12">
    <location>
        <begin position="127"/>
        <end position="136"/>
    </location>
</feature>
<feature type="turn" evidence="12">
    <location>
        <begin position="139"/>
        <end position="142"/>
    </location>
</feature>
<feature type="helix" evidence="12">
    <location>
        <begin position="152"/>
        <end position="154"/>
    </location>
</feature>
<feature type="helix" evidence="12">
    <location>
        <begin position="155"/>
        <end position="170"/>
    </location>
</feature>
<feature type="strand" evidence="12">
    <location>
        <begin position="175"/>
        <end position="181"/>
    </location>
</feature>
<feature type="strand" evidence="12">
    <location>
        <begin position="184"/>
        <end position="186"/>
    </location>
</feature>
<feature type="helix" evidence="12">
    <location>
        <begin position="188"/>
        <end position="195"/>
    </location>
</feature>
<feature type="strand" evidence="12">
    <location>
        <begin position="204"/>
        <end position="210"/>
    </location>
</feature>
<feature type="turn" evidence="12">
    <location>
        <begin position="221"/>
        <end position="223"/>
    </location>
</feature>
<feature type="strand" evidence="12">
    <location>
        <begin position="225"/>
        <end position="228"/>
    </location>
</feature>
<feature type="helix" evidence="12">
    <location>
        <begin position="229"/>
        <end position="237"/>
    </location>
</feature>
<feature type="turn" evidence="12">
    <location>
        <begin position="238"/>
        <end position="241"/>
    </location>
</feature>
<feature type="turn" evidence="12">
    <location>
        <begin position="243"/>
        <end position="245"/>
    </location>
</feature>
<feature type="helix" evidence="12">
    <location>
        <begin position="254"/>
        <end position="264"/>
    </location>
</feature>
<feature type="strand" evidence="12">
    <location>
        <begin position="279"/>
        <end position="281"/>
    </location>
</feature>
<feature type="helix" evidence="12">
    <location>
        <begin position="286"/>
        <end position="290"/>
    </location>
</feature>
<feature type="helix" evidence="12">
    <location>
        <begin position="300"/>
        <end position="304"/>
    </location>
</feature>
<feature type="strand" evidence="12">
    <location>
        <begin position="305"/>
        <end position="307"/>
    </location>
</feature>
<feature type="strand" evidence="12">
    <location>
        <begin position="322"/>
        <end position="325"/>
    </location>
</feature>
<feature type="helix" evidence="12">
    <location>
        <begin position="328"/>
        <end position="339"/>
    </location>
</feature>
<gene>
    <name type="primary">C1GalTA</name>
    <name type="ORF">CG9520</name>
</gene>
<comment type="function">
    <text evidence="5 6 7">Glycosyltransferase that generates the core 1 O-glycan Gal-beta1-3GalNAc-alpha1-Ser/Thr (T antigen), which is a precursor for many extended O-glycans in glycoproteins.</text>
</comment>
<comment type="catalytic activity">
    <reaction evidence="7">
        <text>an N-acetyl-alpha-D-galactosaminyl derivative + UDP-alpha-D-galactose = a beta-D-galactosyl-(1-&gt;3)-N-acetyl-alpha-D-galactosaminyl derivative + UDP + H(+)</text>
        <dbReference type="Rhea" id="RHEA:15621"/>
        <dbReference type="ChEBI" id="CHEBI:15378"/>
        <dbReference type="ChEBI" id="CHEBI:28257"/>
        <dbReference type="ChEBI" id="CHEBI:58223"/>
        <dbReference type="ChEBI" id="CHEBI:66914"/>
        <dbReference type="ChEBI" id="CHEBI:133470"/>
        <dbReference type="EC" id="2.4.1.122"/>
    </reaction>
    <physiologicalReaction direction="left-to-right" evidence="10">
        <dbReference type="Rhea" id="RHEA:15622"/>
    </physiologicalReaction>
</comment>
<comment type="catalytic activity">
    <reaction evidence="6">
        <text>a 3-O-[N-acetyl-alpha-D-galactosaminyl]-L-threonyl-[protein] + UDP-alpha-D-galactose = a 3-O-[beta-D-galactosyl-(1-&gt;3)-N-acetyl-alpha-D-galactosaminyl]-L-threonyl-[protein] + UDP + H(+)</text>
        <dbReference type="Rhea" id="RHEA:56196"/>
        <dbReference type="Rhea" id="RHEA-COMP:11689"/>
        <dbReference type="Rhea" id="RHEA-COMP:13923"/>
        <dbReference type="ChEBI" id="CHEBI:15378"/>
        <dbReference type="ChEBI" id="CHEBI:58223"/>
        <dbReference type="ChEBI" id="CHEBI:66914"/>
        <dbReference type="ChEBI" id="CHEBI:87075"/>
        <dbReference type="ChEBI" id="CHEBI:137950"/>
    </reaction>
    <physiologicalReaction direction="left-to-right" evidence="9">
        <dbReference type="Rhea" id="RHEA:56197"/>
    </physiologicalReaction>
</comment>
<comment type="catalytic activity">
    <reaction evidence="6">
        <text>a 3-O-[N-acetyl-alpha-D-galactosaminyl]-L-seryl-[protein] + UDP-alpha-D-galactose = a 3-O-[beta-D-galactosyl-(1-&gt;3)-N-acetyl-alpha-D-galactosaminyl]-L-seryl-[protein] + UDP + H(+)</text>
        <dbReference type="Rhea" id="RHEA:56200"/>
        <dbReference type="Rhea" id="RHEA-COMP:12788"/>
        <dbReference type="Rhea" id="RHEA-COMP:13922"/>
        <dbReference type="ChEBI" id="CHEBI:15378"/>
        <dbReference type="ChEBI" id="CHEBI:53604"/>
        <dbReference type="ChEBI" id="CHEBI:58223"/>
        <dbReference type="ChEBI" id="CHEBI:66914"/>
        <dbReference type="ChEBI" id="CHEBI:137949"/>
    </reaction>
    <physiologicalReaction direction="left-to-right" evidence="9">
        <dbReference type="Rhea" id="RHEA:56201"/>
    </physiologicalReaction>
</comment>
<comment type="cofactor">
    <cofactor evidence="7">
        <name>Mn(2+)</name>
        <dbReference type="ChEBI" id="CHEBI:29035"/>
    </cofactor>
</comment>
<comment type="biophysicochemical properties">
    <kinetics>
        <KM evidence="7">88 uM for UDP-Gal</KM>
        <KM evidence="7">195 uM for APDTRP glycopeptide</KM>
        <KM evidence="7">246.2 uM for APDSRP glycopeptide</KM>
        <KM evidence="7">83.02 uM for YAATGPF glycopeptide</KM>
        <KM evidence="7">78.17 uM for YAATGPY glycopeptide</KM>
        <KM evidence="7">55.14 uM for PAATGPF glycopeptide</KM>
        <KM evidence="7">50.06 uM for PAATGPY glycopeptide</KM>
        <KM evidence="7">110 uM for FAATGPF glycopeptide</KM>
        <KM evidence="7">118.8 uM for YAETGPF glycopeptide</KM>
        <KM evidence="7">139.6 uM for YADTGPF glycopeptide</KM>
        <Vmax evidence="7">86.02 nmol/min/mg enzyme with APDTRP glycopeptide as substrate</Vmax>
        <Vmax evidence="7">46.61 nmol/min/mg enzyme with APDSRP glycopeptide as substrate</Vmax>
        <Vmax evidence="7">39.61 nmol/min/mg enzyme with YAATGPF glycopeptide as substrate</Vmax>
        <Vmax evidence="7">87.69 nmol/min/mg enzyme with YAATGPY glycopeptide as substrate</Vmax>
        <Vmax evidence="7">46.38 nmol/min/mg enzyme with PAATGPF glycopeptide as substrate</Vmax>
        <Vmax evidence="7">82.54 nmol/min/mg enzyme with PAATGPY glycopeptide as substrate</Vmax>
        <Vmax evidence="7">120.9 nmol/min/mg enzyme with FAATGPF glycopeptide as substrate</Vmax>
        <Vmax evidence="7">125.9 nmol/min/mg enzyme with YAETGPF glycopeptide as substrate</Vmax>
        <Vmax evidence="7">97.79 nmol/min/mg enzyme with YADTGPF glycopeptide as substrate</Vmax>
        <text evidence="7">kcat is 3.14 min(-1) with UDP-Gal as substrate. kcat is 3.53 min(-1) with APDTRP glycopeptide as substrate. kcat is 1.91 min(-1) with APDSRP glycopeptide as substrate. kcat is 1.62 min(-1) with YAATGPF glycopeptide as substrate. kcat is 3.6 min(-1) with YAATGPY glycopeptide as substrate. kcat is 1.9 min(-1) with PAATGPF glycopeptide as substrate. kcat is 3.39 min(-1) with PAATGPY glycopeptide as substrate. kcat is 4.96 min(-1) with FAATGPF glycopeptide as substrate. kcat is 5.16 min(-1) with YAETGPF glycopeptide as substrate. kcat is 4.01 min(-1) with YADTGPF glycopeptide as substrate (PubMed:35504880).</text>
    </kinetics>
</comment>
<comment type="pathway">
    <text evidence="7">Protein modification; protein glycosylation.</text>
</comment>
<comment type="subunit">
    <text evidence="7">Homodimer; disulfide-linked.</text>
</comment>
<comment type="subcellular location">
    <subcellularLocation>
        <location evidence="2">Membrane</location>
        <topology evidence="1">Single-pass type II membrane protein</topology>
    </subcellularLocation>
</comment>
<comment type="tissue specificity">
    <text evidence="5">In stage 12 embryos, expression is seen in the amnioserosa and by stage 16, also in the central nervous system, predominantly the ventral nerve cord and brain. Also in embryos, preferential expression is seen in the ejaculatory duct and the nurse cells (but not the oocyte). In larvae, expression is seen throughout the nervous system and imaginal disks. Adult females show expression in the nurse cells and adult males in the ejaculatory duct.</text>
</comment>
<comment type="developmental stage">
    <text evidence="5">Expressed both maternally and zygotically in the embryo and throughout development.</text>
</comment>
<comment type="disruption phenotype">
    <text evidence="5">Morphogenetic defects in which the ventral nerve cord is greatly elongated and the brain hemispheres are misshapen.</text>
</comment>
<comment type="miscellaneous">
    <text evidence="7">Binding of glycopeptide acceptor substrates to the enzyme is mainly driven by the GalNAc moiety while optimal binding and kinetic parameters are reached in the presence of both the GalNAc moiety and the substrate.</text>
</comment>
<comment type="similarity">
    <text evidence="8">Belongs to the glycosyltransferase 31 family. Beta3-Gal-T subfamily.</text>
</comment>
<protein>
    <recommendedName>
        <fullName>Glycoprotein-N-acetylgalactosamine 3-beta-galactosyltransferase 1</fullName>
        <ecNumber evidence="7">2.4.1.122</ecNumber>
    </recommendedName>
    <alternativeName>
        <fullName>Core 1 O-glycan T-synthase</fullName>
    </alternativeName>
    <alternativeName>
        <fullName>Core 1 UDP-galactose:N-acetylgalactosamine-alpha-R beta 1,3-galactosyltransferase 1</fullName>
    </alternativeName>
    <alternativeName>
        <fullName>Core 1 beta1,3-galactosyltransferase 1</fullName>
        <shortName>C1GalT1</shortName>
        <shortName>Core 1 beta3-Gal-T1</shortName>
    </alternativeName>
</protein>
<accession>Q7K237</accession>
<accession>A4V0G7</accession>
<name>C1GLT_DROME</name>
<evidence type="ECO:0000250" key="1"/>
<evidence type="ECO:0000250" key="2">
    <source>
        <dbReference type="UniProtKB" id="Q9JJ05"/>
    </source>
</evidence>
<evidence type="ECO:0000255" key="3"/>
<evidence type="ECO:0000256" key="4">
    <source>
        <dbReference type="SAM" id="MobiDB-lite"/>
    </source>
</evidence>
<evidence type="ECO:0000269" key="5">
    <source>
    </source>
</evidence>
<evidence type="ECO:0000269" key="6">
    <source>
    </source>
</evidence>
<evidence type="ECO:0000269" key="7">
    <source>
    </source>
</evidence>
<evidence type="ECO:0000305" key="8"/>
<evidence type="ECO:0000305" key="9">
    <source>
    </source>
</evidence>
<evidence type="ECO:0000305" key="10">
    <source>
    </source>
</evidence>
<evidence type="ECO:0007744" key="11">
    <source>
        <dbReference type="PDB" id="7Q4I"/>
    </source>
</evidence>
<evidence type="ECO:0007829" key="12">
    <source>
        <dbReference type="PDB" id="7Q4I"/>
    </source>
</evidence>
<reference key="1">
    <citation type="journal article" date="2000" name="Science">
        <title>The genome sequence of Drosophila melanogaster.</title>
        <authorList>
            <person name="Adams M.D."/>
            <person name="Celniker S.E."/>
            <person name="Holt R.A."/>
            <person name="Evans C.A."/>
            <person name="Gocayne J.D."/>
            <person name="Amanatides P.G."/>
            <person name="Scherer S.E."/>
            <person name="Li P.W."/>
            <person name="Hoskins R.A."/>
            <person name="Galle R.F."/>
            <person name="George R.A."/>
            <person name="Lewis S.E."/>
            <person name="Richards S."/>
            <person name="Ashburner M."/>
            <person name="Henderson S.N."/>
            <person name="Sutton G.G."/>
            <person name="Wortman J.R."/>
            <person name="Yandell M.D."/>
            <person name="Zhang Q."/>
            <person name="Chen L.X."/>
            <person name="Brandon R.C."/>
            <person name="Rogers Y.-H.C."/>
            <person name="Blazej R.G."/>
            <person name="Champe M."/>
            <person name="Pfeiffer B.D."/>
            <person name="Wan K.H."/>
            <person name="Doyle C."/>
            <person name="Baxter E.G."/>
            <person name="Helt G."/>
            <person name="Nelson C.R."/>
            <person name="Miklos G.L.G."/>
            <person name="Abril J.F."/>
            <person name="Agbayani A."/>
            <person name="An H.-J."/>
            <person name="Andrews-Pfannkoch C."/>
            <person name="Baldwin D."/>
            <person name="Ballew R.M."/>
            <person name="Basu A."/>
            <person name="Baxendale J."/>
            <person name="Bayraktaroglu L."/>
            <person name="Beasley E.M."/>
            <person name="Beeson K.Y."/>
            <person name="Benos P.V."/>
            <person name="Berman B.P."/>
            <person name="Bhandari D."/>
            <person name="Bolshakov S."/>
            <person name="Borkova D."/>
            <person name="Botchan M.R."/>
            <person name="Bouck J."/>
            <person name="Brokstein P."/>
            <person name="Brottier P."/>
            <person name="Burtis K.C."/>
            <person name="Busam D.A."/>
            <person name="Butler H."/>
            <person name="Cadieu E."/>
            <person name="Center A."/>
            <person name="Chandra I."/>
            <person name="Cherry J.M."/>
            <person name="Cawley S."/>
            <person name="Dahlke C."/>
            <person name="Davenport L.B."/>
            <person name="Davies P."/>
            <person name="de Pablos B."/>
            <person name="Delcher A."/>
            <person name="Deng Z."/>
            <person name="Mays A.D."/>
            <person name="Dew I."/>
            <person name="Dietz S.M."/>
            <person name="Dodson K."/>
            <person name="Doup L.E."/>
            <person name="Downes M."/>
            <person name="Dugan-Rocha S."/>
            <person name="Dunkov B.C."/>
            <person name="Dunn P."/>
            <person name="Durbin K.J."/>
            <person name="Evangelista C.C."/>
            <person name="Ferraz C."/>
            <person name="Ferriera S."/>
            <person name="Fleischmann W."/>
            <person name="Fosler C."/>
            <person name="Gabrielian A.E."/>
            <person name="Garg N.S."/>
            <person name="Gelbart W.M."/>
            <person name="Glasser K."/>
            <person name="Glodek A."/>
            <person name="Gong F."/>
            <person name="Gorrell J.H."/>
            <person name="Gu Z."/>
            <person name="Guan P."/>
            <person name="Harris M."/>
            <person name="Harris N.L."/>
            <person name="Harvey D.A."/>
            <person name="Heiman T.J."/>
            <person name="Hernandez J.R."/>
            <person name="Houck J."/>
            <person name="Hostin D."/>
            <person name="Houston K.A."/>
            <person name="Howland T.J."/>
            <person name="Wei M.-H."/>
            <person name="Ibegwam C."/>
            <person name="Jalali M."/>
            <person name="Kalush F."/>
            <person name="Karpen G.H."/>
            <person name="Ke Z."/>
            <person name="Kennison J.A."/>
            <person name="Ketchum K.A."/>
            <person name="Kimmel B.E."/>
            <person name="Kodira C.D."/>
            <person name="Kraft C.L."/>
            <person name="Kravitz S."/>
            <person name="Kulp D."/>
            <person name="Lai Z."/>
            <person name="Lasko P."/>
            <person name="Lei Y."/>
            <person name="Levitsky A.A."/>
            <person name="Li J.H."/>
            <person name="Li Z."/>
            <person name="Liang Y."/>
            <person name="Lin X."/>
            <person name="Liu X."/>
            <person name="Mattei B."/>
            <person name="McIntosh T.C."/>
            <person name="McLeod M.P."/>
            <person name="McPherson D."/>
            <person name="Merkulov G."/>
            <person name="Milshina N.V."/>
            <person name="Mobarry C."/>
            <person name="Morris J."/>
            <person name="Moshrefi A."/>
            <person name="Mount S.M."/>
            <person name="Moy M."/>
            <person name="Murphy B."/>
            <person name="Murphy L."/>
            <person name="Muzny D.M."/>
            <person name="Nelson D.L."/>
            <person name="Nelson D.R."/>
            <person name="Nelson K.A."/>
            <person name="Nixon K."/>
            <person name="Nusskern D.R."/>
            <person name="Pacleb J.M."/>
            <person name="Palazzolo M."/>
            <person name="Pittman G.S."/>
            <person name="Pan S."/>
            <person name="Pollard J."/>
            <person name="Puri V."/>
            <person name="Reese M.G."/>
            <person name="Reinert K."/>
            <person name="Remington K."/>
            <person name="Saunders R.D.C."/>
            <person name="Scheeler F."/>
            <person name="Shen H."/>
            <person name="Shue B.C."/>
            <person name="Siden-Kiamos I."/>
            <person name="Simpson M."/>
            <person name="Skupski M.P."/>
            <person name="Smith T.J."/>
            <person name="Spier E."/>
            <person name="Spradling A.C."/>
            <person name="Stapleton M."/>
            <person name="Strong R."/>
            <person name="Sun E."/>
            <person name="Svirskas R."/>
            <person name="Tector C."/>
            <person name="Turner R."/>
            <person name="Venter E."/>
            <person name="Wang A.H."/>
            <person name="Wang X."/>
            <person name="Wang Z.-Y."/>
            <person name="Wassarman D.A."/>
            <person name="Weinstock G.M."/>
            <person name="Weissenbach J."/>
            <person name="Williams S.M."/>
            <person name="Woodage T."/>
            <person name="Worley K.C."/>
            <person name="Wu D."/>
            <person name="Yang S."/>
            <person name="Yao Q.A."/>
            <person name="Ye J."/>
            <person name="Yeh R.-F."/>
            <person name="Zaveri J.S."/>
            <person name="Zhan M."/>
            <person name="Zhang G."/>
            <person name="Zhao Q."/>
            <person name="Zheng L."/>
            <person name="Zheng X.H."/>
            <person name="Zhong F.N."/>
            <person name="Zhong W."/>
            <person name="Zhou X."/>
            <person name="Zhu S.C."/>
            <person name="Zhu X."/>
            <person name="Smith H.O."/>
            <person name="Gibbs R.A."/>
            <person name="Myers E.W."/>
            <person name="Rubin G.M."/>
            <person name="Venter J.C."/>
        </authorList>
    </citation>
    <scope>NUCLEOTIDE SEQUENCE [LARGE SCALE GENOMIC DNA]</scope>
    <source>
        <strain>Berkeley</strain>
    </source>
</reference>
<reference key="2">
    <citation type="journal article" date="2002" name="Genome Biol.">
        <title>Annotation of the Drosophila melanogaster euchromatic genome: a systematic review.</title>
        <authorList>
            <person name="Misra S."/>
            <person name="Crosby M.A."/>
            <person name="Mungall C.J."/>
            <person name="Matthews B.B."/>
            <person name="Campbell K.S."/>
            <person name="Hradecky P."/>
            <person name="Huang Y."/>
            <person name="Kaminker J.S."/>
            <person name="Millburn G.H."/>
            <person name="Prochnik S.E."/>
            <person name="Smith C.D."/>
            <person name="Tupy J.L."/>
            <person name="Whitfield E.J."/>
            <person name="Bayraktaroglu L."/>
            <person name="Berman B.P."/>
            <person name="Bettencourt B.R."/>
            <person name="Celniker S.E."/>
            <person name="de Grey A.D.N.J."/>
            <person name="Drysdale R.A."/>
            <person name="Harris N.L."/>
            <person name="Richter J."/>
            <person name="Russo S."/>
            <person name="Schroeder A.J."/>
            <person name="Shu S.Q."/>
            <person name="Stapleton M."/>
            <person name="Yamada C."/>
            <person name="Ashburner M."/>
            <person name="Gelbart W.M."/>
            <person name="Rubin G.M."/>
            <person name="Lewis S.E."/>
        </authorList>
    </citation>
    <scope>GENOME REANNOTATION</scope>
    <source>
        <strain>Berkeley</strain>
    </source>
</reference>
<reference key="3">
    <citation type="journal article" date="2002" name="Genome Biol.">
        <title>A Drosophila full-length cDNA resource.</title>
        <authorList>
            <person name="Stapleton M."/>
            <person name="Carlson J.W."/>
            <person name="Brokstein P."/>
            <person name="Yu C."/>
            <person name="Champe M."/>
            <person name="George R.A."/>
            <person name="Guarin H."/>
            <person name="Kronmiller B."/>
            <person name="Pacleb J.M."/>
            <person name="Park S."/>
            <person name="Wan K.H."/>
            <person name="Rubin G.M."/>
            <person name="Celniker S.E."/>
        </authorList>
    </citation>
    <scope>NUCLEOTIDE SEQUENCE [LARGE SCALE MRNA]</scope>
    <source>
        <strain>Berkeley</strain>
        <tissue>Embryo</tissue>
    </source>
</reference>
<reference key="4">
    <citation type="journal article" date="2008" name="Dev. Dyn.">
        <title>Requirement for a core 1 galactosyltransferase in the Drosophila nervous system.</title>
        <authorList>
            <person name="Lin Y.R."/>
            <person name="Reddy B.V."/>
            <person name="Irvine K.D."/>
        </authorList>
    </citation>
    <scope>FUNCTION</scope>
    <scope>TISSUE SPECIFICITY</scope>
    <scope>DEVELOPMENTAL STAGE</scope>
    <scope>DISRUPTION PHENOTYPE</scope>
</reference>
<reference key="5">
    <citation type="journal article" date="2019" name="Sci. Rep.">
        <title>Products of Chemoenzymatic Synthesis Representing MUC1 Tandem Repeat Unit with T-, ST- or STn-antigen Revealed Distinct Specificities of Anti-MUC1 Antibodies.</title>
        <authorList>
            <person name="Yoshimura Y."/>
            <person name="Denda-Nagai K."/>
            <person name="Takahashi Y."/>
            <person name="Nagashima I."/>
            <person name="Shimizu H."/>
            <person name="Kishimoto T."/>
            <person name="Noji M."/>
            <person name="Shichino S."/>
            <person name="Chiba Y."/>
            <person name="Irimura T."/>
        </authorList>
    </citation>
    <scope>FUNCTION</scope>
    <scope>CATALYTIC ACTIVITY</scope>
</reference>
<reference evidence="11" key="6">
    <citation type="journal article" date="2022" name="Nat. Commun.">
        <title>Structural basis for the synthesis of the core 1 structure by C1GalT1.</title>
        <authorList>
            <person name="Gonzalez-Ramirez A.M."/>
            <person name="Grosso A.S."/>
            <person name="Yang Z."/>
            <person name="Companon I."/>
            <person name="Coelho H."/>
            <person name="Narimatsu Y."/>
            <person name="Clausen H."/>
            <person name="Marcelo F."/>
            <person name="Corzana F."/>
            <person name="Hurtado-Guerrero R."/>
        </authorList>
    </citation>
    <scope>X-RAY CRYSTALLOGRAPHY (2.40 ANGSTROMS) OF 73-388 IN COMPLEX WITH MN(2+); UDP AND HUMAN MUC1 GLYCOPEPTIDE</scope>
    <scope>FUNCTION</scope>
    <scope>CATALYTIC ACTIVITY</scope>
    <scope>COFACTOR</scope>
    <scope>BIOPHYSICOCHEMICAL PROPERTIES</scope>
    <scope>PATHWAY</scope>
    <scope>SUBUNIT</scope>
    <scope>MUTAGENESIS OF ARG-152; TYR-213; TYR-218; ASP-255; TRP-300 AND TYR-325</scope>
</reference>
<proteinExistence type="evidence at protein level"/>
<sequence>MTANSLLGRSILNEGRSNKRSFVSLIVGLIVGFCLAELFVYSTPERSEFMPYDGHRHGDVNDAHHSHDMMEMSGPEQDVGGHEHVHENSTIAERLYSEVRVLCWIMTNPSNHQKKARHVKRTWGKRCNKLIFMSSAKDDELDAVALPVGEGRNNLWGKTKEAYKYIYEHHINDADWFLKADDDTYTIVENMRYMLYPYSPETPVYFGCKFKPYVKQGYMSGGAGYVLSREAVRRFVVEALPNPKLCKSDNSGAEDVEIGKCLQNVNVLAGDSRDSNGRGRFFPFVPEHHLIPSHTDKKFWYWQYIFYKTDEGLDCCSDNAISFHYVSPNQMYVLDYLIYHLRPYGIINTPDALPNKLAVGELMPEIKEQATESTSDGVSKRSAETKTQ</sequence>
<dbReference type="EC" id="2.4.1.122" evidence="7"/>
<dbReference type="EMBL" id="AE014134">
    <property type="protein sequence ID" value="AAF52724.1"/>
    <property type="molecule type" value="Genomic_DNA"/>
</dbReference>
<dbReference type="EMBL" id="AE014134">
    <property type="protein sequence ID" value="AAF52725.1"/>
    <property type="molecule type" value="Genomic_DNA"/>
</dbReference>
<dbReference type="EMBL" id="AY061283">
    <property type="protein sequence ID" value="AAL28831.1"/>
    <property type="molecule type" value="mRNA"/>
</dbReference>
<dbReference type="RefSeq" id="NP_609258.1">
    <property type="nucleotide sequence ID" value="NM_135414.3"/>
</dbReference>
<dbReference type="RefSeq" id="NP_723427.1">
    <property type="nucleotide sequence ID" value="NM_164839.2"/>
</dbReference>
<dbReference type="RefSeq" id="NP_723428.1">
    <property type="nucleotide sequence ID" value="NM_164840.2"/>
</dbReference>
<dbReference type="PDB" id="7Q4I">
    <property type="method" value="X-ray"/>
    <property type="resolution" value="2.40 A"/>
    <property type="chains" value="A/B=73-388"/>
</dbReference>
<dbReference type="PDBsum" id="7Q4I"/>
<dbReference type="SMR" id="Q7K237"/>
<dbReference type="BioGRID" id="60328">
    <property type="interactions" value="20"/>
</dbReference>
<dbReference type="FunCoup" id="Q7K237">
    <property type="interactions" value="223"/>
</dbReference>
<dbReference type="STRING" id="7227.FBpp0079388"/>
<dbReference type="CAZy" id="GT31">
    <property type="family name" value="Glycosyltransferase Family 31"/>
</dbReference>
<dbReference type="GlyCosmos" id="Q7K237">
    <property type="glycosylation" value="1 site, No reported glycans"/>
</dbReference>
<dbReference type="GlyGen" id="Q7K237">
    <property type="glycosylation" value="1 site"/>
</dbReference>
<dbReference type="PaxDb" id="7227-FBpp0079388"/>
<dbReference type="DNASU" id="34215"/>
<dbReference type="EnsemblMetazoa" id="FBtr0079788">
    <property type="protein sequence ID" value="FBpp0079388"/>
    <property type="gene ID" value="FBgn0032078"/>
</dbReference>
<dbReference type="EnsemblMetazoa" id="FBtr0079789">
    <property type="protein sequence ID" value="FBpp0079389"/>
    <property type="gene ID" value="FBgn0032078"/>
</dbReference>
<dbReference type="EnsemblMetazoa" id="FBtr0079790">
    <property type="protein sequence ID" value="FBpp0079390"/>
    <property type="gene ID" value="FBgn0032078"/>
</dbReference>
<dbReference type="GeneID" id="34215"/>
<dbReference type="KEGG" id="dme:Dmel_CG9520"/>
<dbReference type="AGR" id="FB:FBgn0032078"/>
<dbReference type="CTD" id="34215"/>
<dbReference type="FlyBase" id="FBgn0032078">
    <property type="gene designation" value="C1GalTA"/>
</dbReference>
<dbReference type="VEuPathDB" id="VectorBase:FBgn0032078"/>
<dbReference type="eggNOG" id="KOG2246">
    <property type="taxonomic scope" value="Eukaryota"/>
</dbReference>
<dbReference type="GeneTree" id="ENSGT00940000164002"/>
<dbReference type="HOGENOM" id="CLU_035857_0_0_1"/>
<dbReference type="InParanoid" id="Q7K237"/>
<dbReference type="OMA" id="WLLSKHD"/>
<dbReference type="OrthoDB" id="414175at2759"/>
<dbReference type="PhylomeDB" id="Q7K237"/>
<dbReference type="BRENDA" id="2.4.1.122">
    <property type="organism ID" value="1994"/>
</dbReference>
<dbReference type="Reactome" id="R-DME-913709">
    <property type="pathway name" value="O-linked glycosylation of mucins"/>
</dbReference>
<dbReference type="UniPathway" id="UPA00378"/>
<dbReference type="BioGRID-ORCS" id="34215">
    <property type="hits" value="0 hits in 1 CRISPR screen"/>
</dbReference>
<dbReference type="GenomeRNAi" id="34215"/>
<dbReference type="PRO" id="PR:Q7K237"/>
<dbReference type="Proteomes" id="UP000000803">
    <property type="component" value="Chromosome 2L"/>
</dbReference>
<dbReference type="Bgee" id="FBgn0032078">
    <property type="expression patterns" value="Expressed in dorsal appendage forming follicle cell in ovary and 236 other cell types or tissues"/>
</dbReference>
<dbReference type="ExpressionAtlas" id="Q7K237">
    <property type="expression patterns" value="baseline and differential"/>
</dbReference>
<dbReference type="GO" id="GO:0000139">
    <property type="term" value="C:Golgi membrane"/>
    <property type="evidence" value="ECO:0000250"/>
    <property type="project" value="FlyBase"/>
</dbReference>
<dbReference type="GO" id="GO:0016020">
    <property type="term" value="C:membrane"/>
    <property type="evidence" value="ECO:0000250"/>
    <property type="project" value="UniProtKB"/>
</dbReference>
<dbReference type="GO" id="GO:0048531">
    <property type="term" value="F:beta-1,3-galactosyltransferase activity"/>
    <property type="evidence" value="ECO:0000314"/>
    <property type="project" value="FlyBase"/>
</dbReference>
<dbReference type="GO" id="GO:0016263">
    <property type="term" value="F:glycoprotein-N-acetylgalactosamine 3-beta-galactosyltransferase activity"/>
    <property type="evidence" value="ECO:0000314"/>
    <property type="project" value="UniProtKB"/>
</dbReference>
<dbReference type="GO" id="GO:0030145">
    <property type="term" value="F:manganese ion binding"/>
    <property type="evidence" value="ECO:0000314"/>
    <property type="project" value="UniProtKB"/>
</dbReference>
<dbReference type="GO" id="GO:0000166">
    <property type="term" value="F:nucleotide binding"/>
    <property type="evidence" value="ECO:0007669"/>
    <property type="project" value="UniProtKB-KW"/>
</dbReference>
<dbReference type="GO" id="GO:0042803">
    <property type="term" value="F:protein homodimerization activity"/>
    <property type="evidence" value="ECO:0000314"/>
    <property type="project" value="UniProtKB"/>
</dbReference>
<dbReference type="GO" id="GO:0021551">
    <property type="term" value="P:central nervous system morphogenesis"/>
    <property type="evidence" value="ECO:0000315"/>
    <property type="project" value="FlyBase"/>
</dbReference>
<dbReference type="GO" id="GO:0009247">
    <property type="term" value="P:glycolipid biosynthetic process"/>
    <property type="evidence" value="ECO:0000314"/>
    <property type="project" value="FlyBase"/>
</dbReference>
<dbReference type="GO" id="GO:0055001">
    <property type="term" value="P:muscle cell development"/>
    <property type="evidence" value="ECO:0000315"/>
    <property type="project" value="FlyBase"/>
</dbReference>
<dbReference type="GO" id="GO:1902037">
    <property type="term" value="P:negative regulation of hematopoietic stem cell differentiation"/>
    <property type="evidence" value="ECO:0000315"/>
    <property type="project" value="FlyBase"/>
</dbReference>
<dbReference type="GO" id="GO:0007528">
    <property type="term" value="P:neuromuscular junction development"/>
    <property type="evidence" value="ECO:0000315"/>
    <property type="project" value="FlyBase"/>
</dbReference>
<dbReference type="GO" id="GO:0006493">
    <property type="term" value="P:protein O-linked glycosylation"/>
    <property type="evidence" value="ECO:0000314"/>
    <property type="project" value="FlyBase"/>
</dbReference>
<dbReference type="GO" id="GO:0051489">
    <property type="term" value="P:regulation of filopodium assembly"/>
    <property type="evidence" value="ECO:0000315"/>
    <property type="project" value="FlyBase"/>
</dbReference>
<dbReference type="FunFam" id="3.90.550.50:FF:000017">
    <property type="entry name" value="Glycoprotein-N-acetylgalactosamine 3-beta-galactosyltransferase 1"/>
    <property type="match status" value="1"/>
</dbReference>
<dbReference type="Gene3D" id="3.90.550.50">
    <property type="match status" value="1"/>
</dbReference>
<dbReference type="InterPro" id="IPR026050">
    <property type="entry name" value="C1GALT1/C1GALT1_chp1"/>
</dbReference>
<dbReference type="InterPro" id="IPR003378">
    <property type="entry name" value="Fringe-like_glycosylTrfase"/>
</dbReference>
<dbReference type="PANTHER" id="PTHR23033">
    <property type="entry name" value="BETA1,3-GALACTOSYLTRANSFERASE"/>
    <property type="match status" value="1"/>
</dbReference>
<dbReference type="PANTHER" id="PTHR23033:SF14">
    <property type="entry name" value="GLYCOPROTEIN-N-ACETYLGALACTOSAMINE 3-BETA-GALACTOSYLTRANSFERASE 1-RELATED"/>
    <property type="match status" value="1"/>
</dbReference>
<dbReference type="Pfam" id="PF02434">
    <property type="entry name" value="Fringe"/>
    <property type="match status" value="1"/>
</dbReference>